<feature type="chain" id="PRO_0000057915" description="6-pyruvoyl tetrahydrobiopterin synthase">
    <location>
        <begin position="1"/>
        <end position="144"/>
    </location>
</feature>
<feature type="active site" description="Proton acceptor" evidence="3">
    <location>
        <position position="42"/>
    </location>
</feature>
<feature type="active site" description="Charge relay system" evidence="4">
    <location>
        <position position="89"/>
    </location>
</feature>
<feature type="active site" description="Charge relay system" evidence="4">
    <location>
        <position position="133"/>
    </location>
</feature>
<feature type="binding site" evidence="3">
    <location>
        <position position="23"/>
    </location>
    <ligand>
        <name>Zn(2+)</name>
        <dbReference type="ChEBI" id="CHEBI:29105"/>
    </ligand>
</feature>
<feature type="binding site" evidence="3">
    <location>
        <position position="48"/>
    </location>
    <ligand>
        <name>Zn(2+)</name>
        <dbReference type="ChEBI" id="CHEBI:29105"/>
    </ligand>
</feature>
<feature type="binding site" evidence="3">
    <location>
        <position position="50"/>
    </location>
    <ligand>
        <name>Zn(2+)</name>
        <dbReference type="ChEBI" id="CHEBI:29105"/>
    </ligand>
</feature>
<feature type="modified residue" description="Phosphoserine" evidence="2">
    <location>
        <position position="18"/>
    </location>
</feature>
<feature type="modified residue" description="Phosphoserine" evidence="9">
    <location>
        <position position="27"/>
    </location>
</feature>
<feature type="modified residue" description="Phosphotyrosine" evidence="2">
    <location>
        <position position="127"/>
    </location>
</feature>
<feature type="sequence conflict" description="In Ref. 1; AAD15827." evidence="6" ref="1">
    <original>D</original>
    <variation>G</variation>
    <location>
        <position position="6"/>
    </location>
</feature>
<dbReference type="EC" id="4.2.3.12" evidence="7"/>
<dbReference type="EMBL" id="AF061880">
    <property type="protein sequence ID" value="AAD15827.1"/>
    <property type="molecule type" value="Genomic_DNA"/>
</dbReference>
<dbReference type="EMBL" id="AF061878">
    <property type="protein sequence ID" value="AAD15827.1"/>
    <property type="status" value="JOINED"/>
    <property type="molecule type" value="Genomic_DNA"/>
</dbReference>
<dbReference type="EMBL" id="AF061879">
    <property type="protein sequence ID" value="AAD15827.1"/>
    <property type="status" value="JOINED"/>
    <property type="molecule type" value="Genomic_DNA"/>
</dbReference>
<dbReference type="EMBL" id="AF043225">
    <property type="protein sequence ID" value="AAD02249.1"/>
    <property type="molecule type" value="mRNA"/>
</dbReference>
<dbReference type="EMBL" id="AK002614">
    <property type="protein sequence ID" value="BAB22231.1"/>
    <property type="molecule type" value="mRNA"/>
</dbReference>
<dbReference type="EMBL" id="AK146987">
    <property type="protein sequence ID" value="BAE27590.1"/>
    <property type="molecule type" value="mRNA"/>
</dbReference>
<dbReference type="EMBL" id="BC029013">
    <property type="protein sequence ID" value="AAH29013.1"/>
    <property type="molecule type" value="mRNA"/>
</dbReference>
<dbReference type="CCDS" id="CCDS23164.1"/>
<dbReference type="RefSeq" id="NP_035350.1">
    <property type="nucleotide sequence ID" value="NM_011220.3"/>
</dbReference>
<dbReference type="SMR" id="Q9R1Z7"/>
<dbReference type="BioGRID" id="202512">
    <property type="interactions" value="6"/>
</dbReference>
<dbReference type="FunCoup" id="Q9R1Z7">
    <property type="interactions" value="1538"/>
</dbReference>
<dbReference type="IntAct" id="Q9R1Z7">
    <property type="interactions" value="4"/>
</dbReference>
<dbReference type="MINT" id="Q9R1Z7"/>
<dbReference type="STRING" id="10090.ENSMUSP00000034570"/>
<dbReference type="GlyGen" id="Q9R1Z7">
    <property type="glycosylation" value="1 site, 1 N-linked glycan (1 site)"/>
</dbReference>
<dbReference type="iPTMnet" id="Q9R1Z7"/>
<dbReference type="PhosphoSitePlus" id="Q9R1Z7"/>
<dbReference type="SwissPalm" id="Q9R1Z7"/>
<dbReference type="jPOST" id="Q9R1Z7"/>
<dbReference type="PaxDb" id="10090-ENSMUSP00000034570"/>
<dbReference type="PeptideAtlas" id="Q9R1Z7"/>
<dbReference type="ProteomicsDB" id="301953"/>
<dbReference type="Pumba" id="Q9R1Z7"/>
<dbReference type="Antibodypedia" id="780">
    <property type="antibodies" value="200 antibodies from 28 providers"/>
</dbReference>
<dbReference type="DNASU" id="19286"/>
<dbReference type="Ensembl" id="ENSMUST00000034570.7">
    <property type="protein sequence ID" value="ENSMUSP00000034570.6"/>
    <property type="gene ID" value="ENSMUSG00000032067.7"/>
</dbReference>
<dbReference type="GeneID" id="19286"/>
<dbReference type="KEGG" id="mmu:19286"/>
<dbReference type="UCSC" id="uc009pjp.1">
    <property type="organism name" value="mouse"/>
</dbReference>
<dbReference type="AGR" id="MGI:1338783"/>
<dbReference type="CTD" id="5805"/>
<dbReference type="MGI" id="MGI:1338783">
    <property type="gene designation" value="Pts"/>
</dbReference>
<dbReference type="VEuPathDB" id="HostDB:ENSMUSG00000032067"/>
<dbReference type="eggNOG" id="KOG4105">
    <property type="taxonomic scope" value="Eukaryota"/>
</dbReference>
<dbReference type="GeneTree" id="ENSGT00390000002752"/>
<dbReference type="HOGENOM" id="CLU_111016_2_0_1"/>
<dbReference type="InParanoid" id="Q9R1Z7"/>
<dbReference type="OMA" id="YETERNF"/>
<dbReference type="PhylomeDB" id="Q9R1Z7"/>
<dbReference type="TreeFam" id="TF105796"/>
<dbReference type="Reactome" id="R-MMU-1474151">
    <property type="pathway name" value="Tetrahydrobiopterin (BH4) synthesis, recycling, salvage and regulation"/>
</dbReference>
<dbReference type="UniPathway" id="UPA00849">
    <property type="reaction ID" value="UER00819"/>
</dbReference>
<dbReference type="BioGRID-ORCS" id="19286">
    <property type="hits" value="2 hits in 77 CRISPR screens"/>
</dbReference>
<dbReference type="ChiTaRS" id="Pts">
    <property type="organism name" value="mouse"/>
</dbReference>
<dbReference type="PRO" id="PR:Q9R1Z7"/>
<dbReference type="Proteomes" id="UP000000589">
    <property type="component" value="Chromosome 9"/>
</dbReference>
<dbReference type="RNAct" id="Q9R1Z7">
    <property type="molecule type" value="protein"/>
</dbReference>
<dbReference type="Bgee" id="ENSMUSG00000032067">
    <property type="expression patterns" value="Expressed in right kidney and 261 other cell types or tissues"/>
</dbReference>
<dbReference type="ExpressionAtlas" id="Q9R1Z7">
    <property type="expression patterns" value="baseline and differential"/>
</dbReference>
<dbReference type="GO" id="GO:0005829">
    <property type="term" value="C:cytosol"/>
    <property type="evidence" value="ECO:0000314"/>
    <property type="project" value="MGI"/>
</dbReference>
<dbReference type="GO" id="GO:0005739">
    <property type="term" value="C:mitochondrion"/>
    <property type="evidence" value="ECO:0007005"/>
    <property type="project" value="MGI"/>
</dbReference>
<dbReference type="GO" id="GO:0003874">
    <property type="term" value="F:6-pyruvoyltetrahydropterin synthase activity"/>
    <property type="evidence" value="ECO:0000314"/>
    <property type="project" value="MGI"/>
</dbReference>
<dbReference type="GO" id="GO:0042802">
    <property type="term" value="F:identical protein binding"/>
    <property type="evidence" value="ECO:0000353"/>
    <property type="project" value="MGI"/>
</dbReference>
<dbReference type="GO" id="GO:0046872">
    <property type="term" value="F:metal ion binding"/>
    <property type="evidence" value="ECO:0007669"/>
    <property type="project" value="UniProtKB-KW"/>
</dbReference>
<dbReference type="GO" id="GO:0006729">
    <property type="term" value="P:tetrahydrobiopterin biosynthetic process"/>
    <property type="evidence" value="ECO:0000314"/>
    <property type="project" value="MGI"/>
</dbReference>
<dbReference type="GO" id="GO:0046146">
    <property type="term" value="P:tetrahydrobiopterin metabolic process"/>
    <property type="evidence" value="ECO:0000315"/>
    <property type="project" value="MGI"/>
</dbReference>
<dbReference type="CDD" id="cd00470">
    <property type="entry name" value="PTPS"/>
    <property type="match status" value="1"/>
</dbReference>
<dbReference type="FunFam" id="3.30.479.10:FF:000003">
    <property type="entry name" value="6-pyruvoyl tetrahydrobiopterin synthase"/>
    <property type="match status" value="1"/>
</dbReference>
<dbReference type="Gene3D" id="3.30.479.10">
    <property type="entry name" value="6-pyruvoyl tetrahydropterin synthase/QueD"/>
    <property type="match status" value="1"/>
</dbReference>
<dbReference type="InterPro" id="IPR007115">
    <property type="entry name" value="6-PTP_synth/QueD"/>
</dbReference>
<dbReference type="InterPro" id="IPR038418">
    <property type="entry name" value="6-PTP_synth/QueD_sf"/>
</dbReference>
<dbReference type="InterPro" id="IPR022470">
    <property type="entry name" value="PTPS_Cys_AS"/>
</dbReference>
<dbReference type="InterPro" id="IPR022469">
    <property type="entry name" value="PTPS_His_AS"/>
</dbReference>
<dbReference type="NCBIfam" id="TIGR00039">
    <property type="entry name" value="6PTHBS"/>
    <property type="match status" value="1"/>
</dbReference>
<dbReference type="PANTHER" id="PTHR12589:SF7">
    <property type="entry name" value="6-PYRUVOYL TETRAHYDROBIOPTERIN SYNTHASE"/>
    <property type="match status" value="1"/>
</dbReference>
<dbReference type="PANTHER" id="PTHR12589">
    <property type="entry name" value="PYRUVOYL TETRAHYDROBIOPTERIN SYNTHASE"/>
    <property type="match status" value="1"/>
</dbReference>
<dbReference type="Pfam" id="PF01242">
    <property type="entry name" value="PTPS"/>
    <property type="match status" value="1"/>
</dbReference>
<dbReference type="PIRSF" id="PIRSF006113">
    <property type="entry name" value="PTP_synth"/>
    <property type="match status" value="1"/>
</dbReference>
<dbReference type="SUPFAM" id="SSF55620">
    <property type="entry name" value="Tetrahydrobiopterin biosynthesis enzymes-like"/>
    <property type="match status" value="1"/>
</dbReference>
<dbReference type="PROSITE" id="PS00987">
    <property type="entry name" value="PTPS_1"/>
    <property type="match status" value="1"/>
</dbReference>
<dbReference type="PROSITE" id="PS00988">
    <property type="entry name" value="PTPS_2"/>
    <property type="match status" value="1"/>
</dbReference>
<sequence length="144" mass="16188">MSAAGDLRRRARLSRLVSFSASHRLHSPSLSDEENLRVFGKCNNPNGHGHNYKVVVTVHGEIDPVTGMVMNLTDLKEYMEEAIMKPLDHKNLDLDVPYFADAVSTTENVAVYIWESLQKLLPVGALYKVKVFETDNNIVVYKGE</sequence>
<accession>Q9R1Z7</accession>
<accession>Q3UIB6</accession>
<accession>Q9Z2N2</accession>
<organism>
    <name type="scientific">Mus musculus</name>
    <name type="common">Mouse</name>
    <dbReference type="NCBI Taxonomy" id="10090"/>
    <lineage>
        <taxon>Eukaryota</taxon>
        <taxon>Metazoa</taxon>
        <taxon>Chordata</taxon>
        <taxon>Craniata</taxon>
        <taxon>Vertebrata</taxon>
        <taxon>Euteleostomi</taxon>
        <taxon>Mammalia</taxon>
        <taxon>Eutheria</taxon>
        <taxon>Euarchontoglires</taxon>
        <taxon>Glires</taxon>
        <taxon>Rodentia</taxon>
        <taxon>Myomorpha</taxon>
        <taxon>Muroidea</taxon>
        <taxon>Muridae</taxon>
        <taxon>Murinae</taxon>
        <taxon>Mus</taxon>
        <taxon>Mus</taxon>
    </lineage>
</organism>
<reference key="1">
    <citation type="journal article" date="1998" name="Biol. Chem.">
        <title>Structure, genomic localization and recombinant expression of the mouse 6-pyruvoyl-tetrahydropterin synthase gene.</title>
        <authorList>
            <person name="Turri M.O."/>
            <person name="Ilg E.C."/>
            <person name="Thony B."/>
            <person name="Blau N."/>
        </authorList>
    </citation>
    <scope>NUCLEOTIDE SEQUENCE [GENOMIC DNA]</scope>
    <scope>FUNCTION</scope>
    <scope>CATALYTIC ACTIVITY</scope>
    <scope>BIOPHYSICOCHEMICAL PROPERTIES</scope>
    <scope>SUBUNIT</scope>
    <source>
        <strain>129/Ola</strain>
    </source>
</reference>
<reference key="2">
    <citation type="submission" date="1998-01" db="EMBL/GenBank/DDBJ databases">
        <authorList>
            <person name="Thony B."/>
            <person name="Turri M."/>
            <person name="Blau N."/>
        </authorList>
    </citation>
    <scope>NUCLEOTIDE SEQUENCE</scope>
    <source>
        <strain>C57BL/6J</strain>
        <tissue>Placenta</tissue>
    </source>
</reference>
<reference key="3">
    <citation type="journal article" date="2005" name="Science">
        <title>The transcriptional landscape of the mammalian genome.</title>
        <authorList>
            <person name="Carninci P."/>
            <person name="Kasukawa T."/>
            <person name="Katayama S."/>
            <person name="Gough J."/>
            <person name="Frith M.C."/>
            <person name="Maeda N."/>
            <person name="Oyama R."/>
            <person name="Ravasi T."/>
            <person name="Lenhard B."/>
            <person name="Wells C."/>
            <person name="Kodzius R."/>
            <person name="Shimokawa K."/>
            <person name="Bajic V.B."/>
            <person name="Brenner S.E."/>
            <person name="Batalov S."/>
            <person name="Forrest A.R."/>
            <person name="Zavolan M."/>
            <person name="Davis M.J."/>
            <person name="Wilming L.G."/>
            <person name="Aidinis V."/>
            <person name="Allen J.E."/>
            <person name="Ambesi-Impiombato A."/>
            <person name="Apweiler R."/>
            <person name="Aturaliya R.N."/>
            <person name="Bailey T.L."/>
            <person name="Bansal M."/>
            <person name="Baxter L."/>
            <person name="Beisel K.W."/>
            <person name="Bersano T."/>
            <person name="Bono H."/>
            <person name="Chalk A.M."/>
            <person name="Chiu K.P."/>
            <person name="Choudhary V."/>
            <person name="Christoffels A."/>
            <person name="Clutterbuck D.R."/>
            <person name="Crowe M.L."/>
            <person name="Dalla E."/>
            <person name="Dalrymple B.P."/>
            <person name="de Bono B."/>
            <person name="Della Gatta G."/>
            <person name="di Bernardo D."/>
            <person name="Down T."/>
            <person name="Engstrom P."/>
            <person name="Fagiolini M."/>
            <person name="Faulkner G."/>
            <person name="Fletcher C.F."/>
            <person name="Fukushima T."/>
            <person name="Furuno M."/>
            <person name="Futaki S."/>
            <person name="Gariboldi M."/>
            <person name="Georgii-Hemming P."/>
            <person name="Gingeras T.R."/>
            <person name="Gojobori T."/>
            <person name="Green R.E."/>
            <person name="Gustincich S."/>
            <person name="Harbers M."/>
            <person name="Hayashi Y."/>
            <person name="Hensch T.K."/>
            <person name="Hirokawa N."/>
            <person name="Hill D."/>
            <person name="Huminiecki L."/>
            <person name="Iacono M."/>
            <person name="Ikeo K."/>
            <person name="Iwama A."/>
            <person name="Ishikawa T."/>
            <person name="Jakt M."/>
            <person name="Kanapin A."/>
            <person name="Katoh M."/>
            <person name="Kawasawa Y."/>
            <person name="Kelso J."/>
            <person name="Kitamura H."/>
            <person name="Kitano H."/>
            <person name="Kollias G."/>
            <person name="Krishnan S.P."/>
            <person name="Kruger A."/>
            <person name="Kummerfeld S.K."/>
            <person name="Kurochkin I.V."/>
            <person name="Lareau L.F."/>
            <person name="Lazarevic D."/>
            <person name="Lipovich L."/>
            <person name="Liu J."/>
            <person name="Liuni S."/>
            <person name="McWilliam S."/>
            <person name="Madan Babu M."/>
            <person name="Madera M."/>
            <person name="Marchionni L."/>
            <person name="Matsuda H."/>
            <person name="Matsuzawa S."/>
            <person name="Miki H."/>
            <person name="Mignone F."/>
            <person name="Miyake S."/>
            <person name="Morris K."/>
            <person name="Mottagui-Tabar S."/>
            <person name="Mulder N."/>
            <person name="Nakano N."/>
            <person name="Nakauchi H."/>
            <person name="Ng P."/>
            <person name="Nilsson R."/>
            <person name="Nishiguchi S."/>
            <person name="Nishikawa S."/>
            <person name="Nori F."/>
            <person name="Ohara O."/>
            <person name="Okazaki Y."/>
            <person name="Orlando V."/>
            <person name="Pang K.C."/>
            <person name="Pavan W.J."/>
            <person name="Pavesi G."/>
            <person name="Pesole G."/>
            <person name="Petrovsky N."/>
            <person name="Piazza S."/>
            <person name="Reed J."/>
            <person name="Reid J.F."/>
            <person name="Ring B.Z."/>
            <person name="Ringwald M."/>
            <person name="Rost B."/>
            <person name="Ruan Y."/>
            <person name="Salzberg S.L."/>
            <person name="Sandelin A."/>
            <person name="Schneider C."/>
            <person name="Schoenbach C."/>
            <person name="Sekiguchi K."/>
            <person name="Semple C.A."/>
            <person name="Seno S."/>
            <person name="Sessa L."/>
            <person name="Sheng Y."/>
            <person name="Shibata Y."/>
            <person name="Shimada H."/>
            <person name="Shimada K."/>
            <person name="Silva D."/>
            <person name="Sinclair B."/>
            <person name="Sperling S."/>
            <person name="Stupka E."/>
            <person name="Sugiura K."/>
            <person name="Sultana R."/>
            <person name="Takenaka Y."/>
            <person name="Taki K."/>
            <person name="Tammoja K."/>
            <person name="Tan S.L."/>
            <person name="Tang S."/>
            <person name="Taylor M.S."/>
            <person name="Tegner J."/>
            <person name="Teichmann S.A."/>
            <person name="Ueda H.R."/>
            <person name="van Nimwegen E."/>
            <person name="Verardo R."/>
            <person name="Wei C.L."/>
            <person name="Yagi K."/>
            <person name="Yamanishi H."/>
            <person name="Zabarovsky E."/>
            <person name="Zhu S."/>
            <person name="Zimmer A."/>
            <person name="Hide W."/>
            <person name="Bult C."/>
            <person name="Grimmond S.M."/>
            <person name="Teasdale R.D."/>
            <person name="Liu E.T."/>
            <person name="Brusic V."/>
            <person name="Quackenbush J."/>
            <person name="Wahlestedt C."/>
            <person name="Mattick J.S."/>
            <person name="Hume D.A."/>
            <person name="Kai C."/>
            <person name="Sasaki D."/>
            <person name="Tomaru Y."/>
            <person name="Fukuda S."/>
            <person name="Kanamori-Katayama M."/>
            <person name="Suzuki M."/>
            <person name="Aoki J."/>
            <person name="Arakawa T."/>
            <person name="Iida J."/>
            <person name="Imamura K."/>
            <person name="Itoh M."/>
            <person name="Kato T."/>
            <person name="Kawaji H."/>
            <person name="Kawagashira N."/>
            <person name="Kawashima T."/>
            <person name="Kojima M."/>
            <person name="Kondo S."/>
            <person name="Konno H."/>
            <person name="Nakano K."/>
            <person name="Ninomiya N."/>
            <person name="Nishio T."/>
            <person name="Okada M."/>
            <person name="Plessy C."/>
            <person name="Shibata K."/>
            <person name="Shiraki T."/>
            <person name="Suzuki S."/>
            <person name="Tagami M."/>
            <person name="Waki K."/>
            <person name="Watahiki A."/>
            <person name="Okamura-Oho Y."/>
            <person name="Suzuki H."/>
            <person name="Kawai J."/>
            <person name="Hayashizaki Y."/>
        </authorList>
    </citation>
    <scope>NUCLEOTIDE SEQUENCE [LARGE SCALE MRNA]</scope>
    <source>
        <strain>C57BL/6J</strain>
        <tissue>Kidney</tissue>
        <tissue>Stomach</tissue>
    </source>
</reference>
<reference key="4">
    <citation type="journal article" date="2004" name="Genome Res.">
        <title>The status, quality, and expansion of the NIH full-length cDNA project: the Mammalian Gene Collection (MGC).</title>
        <authorList>
            <consortium name="The MGC Project Team"/>
        </authorList>
    </citation>
    <scope>NUCLEOTIDE SEQUENCE [LARGE SCALE MRNA]</scope>
    <source>
        <tissue>Retina</tissue>
    </source>
</reference>
<reference key="5">
    <citation type="journal article" date="2010" name="Cell">
        <title>A tissue-specific atlas of mouse protein phosphorylation and expression.</title>
        <authorList>
            <person name="Huttlin E.L."/>
            <person name="Jedrychowski M.P."/>
            <person name="Elias J.E."/>
            <person name="Goswami T."/>
            <person name="Rad R."/>
            <person name="Beausoleil S.A."/>
            <person name="Villen J."/>
            <person name="Haas W."/>
            <person name="Sowa M.E."/>
            <person name="Gygi S.P."/>
        </authorList>
    </citation>
    <scope>PHOSPHORYLATION [LARGE SCALE ANALYSIS] AT SER-27</scope>
    <scope>IDENTIFICATION BY MASS SPECTROMETRY [LARGE SCALE ANALYSIS]</scope>
    <source>
        <tissue>Brain</tissue>
        <tissue>Brown adipose tissue</tissue>
        <tissue>Heart</tissue>
        <tissue>Kidney</tissue>
        <tissue>Liver</tissue>
        <tissue>Lung</tissue>
        <tissue>Spleen</tissue>
        <tissue>Testis</tissue>
    </source>
</reference>
<comment type="function">
    <text evidence="7">Involved in the biosynthesis of tetrahydrobiopterin, an essential cofactor of aromatic amino acid hydroxylases. Catalyzes the transformation of 7,8-dihydroneopterin triphosphate into 6-pyruvoyl tetrahydropterin.</text>
</comment>
<comment type="catalytic activity">
    <reaction evidence="7">
        <text>7,8-dihydroneopterin 3'-triphosphate = 6-pyruvoyl-5,6,7,8-tetrahydropterin + triphosphate + H(+)</text>
        <dbReference type="Rhea" id="RHEA:22048"/>
        <dbReference type="ChEBI" id="CHEBI:15378"/>
        <dbReference type="ChEBI" id="CHEBI:18036"/>
        <dbReference type="ChEBI" id="CHEBI:58462"/>
        <dbReference type="ChEBI" id="CHEBI:136564"/>
        <dbReference type="EC" id="4.2.3.12"/>
    </reaction>
    <physiologicalReaction direction="left-to-right" evidence="7">
        <dbReference type="Rhea" id="RHEA:22049"/>
    </physiologicalReaction>
</comment>
<comment type="cofactor">
    <cofactor evidence="1">
        <name>Zn(2+)</name>
        <dbReference type="ChEBI" id="CHEBI:29105"/>
    </cofactor>
    <text evidence="1">Binds 1 zinc ion per subunit.</text>
</comment>
<comment type="biophysicochemical properties">
    <kinetics>
        <KM evidence="5">10.6 uM for dihydroneopterin triphosphate</KM>
        <text evidence="5">kcat is 0.27 (-1) with dihydroneopterin triphosphate as substrate.</text>
    </kinetics>
</comment>
<comment type="pathway">
    <text>Cofactor biosynthesis; tetrahydrobiopterin biosynthesis; tetrahydrobiopterin from 7,8-dihydroneopterin triphosphate: step 1/3.</text>
</comment>
<comment type="subunit">
    <text evidence="1 5">Homodimer (PubMed:9894812). Homohexamer formed of two homotrimers in a head to head fashion.</text>
</comment>
<comment type="PTM">
    <text evidence="1">Phosphorylation of Ser-18 is required for maximal enzyme activity.</text>
</comment>
<comment type="miscellaneous">
    <text>The active site is at the interface between 2 subunits. The proton acceptor Cys is on one subunit, and the charge relay system is on the other subunit.</text>
</comment>
<comment type="similarity">
    <text evidence="6">Belongs to the PTPS family.</text>
</comment>
<keyword id="KW-0456">Lyase</keyword>
<keyword id="KW-0479">Metal-binding</keyword>
<keyword id="KW-0597">Phosphoprotein</keyword>
<keyword id="KW-1185">Reference proteome</keyword>
<keyword id="KW-0783">Tetrahydrobiopterin biosynthesis</keyword>
<keyword id="KW-0862">Zinc</keyword>
<gene>
    <name evidence="8" type="primary">Pts</name>
</gene>
<proteinExistence type="evidence at protein level"/>
<evidence type="ECO:0000250" key="1"/>
<evidence type="ECO:0000250" key="2">
    <source>
        <dbReference type="UniProtKB" id="Q03393"/>
    </source>
</evidence>
<evidence type="ECO:0000255" key="3">
    <source>
        <dbReference type="PROSITE-ProRule" id="PRU10123"/>
    </source>
</evidence>
<evidence type="ECO:0000255" key="4">
    <source>
        <dbReference type="PROSITE-ProRule" id="PRU10124"/>
    </source>
</evidence>
<evidence type="ECO:0000269" key="5">
    <source>
    </source>
</evidence>
<evidence type="ECO:0000305" key="6"/>
<evidence type="ECO:0000305" key="7">
    <source>
    </source>
</evidence>
<evidence type="ECO:0000312" key="8">
    <source>
        <dbReference type="MGI" id="MGI:1338783"/>
    </source>
</evidence>
<evidence type="ECO:0007744" key="9">
    <source>
    </source>
</evidence>
<name>PTPS_MOUSE</name>
<protein>
    <recommendedName>
        <fullName>6-pyruvoyl tetrahydrobiopterin synthase</fullName>
        <shortName>PTP synthase</shortName>
        <shortName>PTPS</shortName>
        <ecNumber evidence="7">4.2.3.12</ecNumber>
    </recommendedName>
</protein>